<gene>
    <name type="primary">Rala</name>
    <name type="ORF">CG2849</name>
</gene>
<name>RALA_DROME</name>
<accession>P48555</accession>
<accession>Q540X1</accession>
<accession>Q9W4Q6</accession>
<organism>
    <name type="scientific">Drosophila melanogaster</name>
    <name type="common">Fruit fly</name>
    <dbReference type="NCBI Taxonomy" id="7227"/>
    <lineage>
        <taxon>Eukaryota</taxon>
        <taxon>Metazoa</taxon>
        <taxon>Ecdysozoa</taxon>
        <taxon>Arthropoda</taxon>
        <taxon>Hexapoda</taxon>
        <taxon>Insecta</taxon>
        <taxon>Pterygota</taxon>
        <taxon>Neoptera</taxon>
        <taxon>Endopterygota</taxon>
        <taxon>Diptera</taxon>
        <taxon>Brachycera</taxon>
        <taxon>Muscomorpha</taxon>
        <taxon>Ephydroidea</taxon>
        <taxon>Drosophilidae</taxon>
        <taxon>Drosophila</taxon>
        <taxon>Sophophora</taxon>
    </lineage>
</organism>
<evidence type="ECO:0000250" key="1"/>
<evidence type="ECO:0000250" key="2">
    <source>
        <dbReference type="UniProtKB" id="P11233"/>
    </source>
</evidence>
<evidence type="ECO:0000305" key="3"/>
<evidence type="ECO:0007829" key="4">
    <source>
        <dbReference type="PDB" id="5CM8"/>
    </source>
</evidence>
<feature type="chain" id="PRO_0000082697" description="Ras-related protein Ral-a">
    <location>
        <begin position="1"/>
        <end position="198"/>
    </location>
</feature>
<feature type="propeptide" id="PRO_0000281348" description="Removed in mature form" evidence="1">
    <location>
        <begin position="199"/>
        <end position="201"/>
    </location>
</feature>
<feature type="short sequence motif" description="Effector region">
    <location>
        <begin position="40"/>
        <end position="48"/>
    </location>
</feature>
<feature type="binding site" evidence="1">
    <location>
        <begin position="18"/>
        <end position="25"/>
    </location>
    <ligand>
        <name>GTP</name>
        <dbReference type="ChEBI" id="CHEBI:37565"/>
    </ligand>
</feature>
<feature type="binding site" evidence="1">
    <location>
        <begin position="65"/>
        <end position="69"/>
    </location>
    <ligand>
        <name>GTP</name>
        <dbReference type="ChEBI" id="CHEBI:37565"/>
    </ligand>
</feature>
<feature type="binding site" evidence="1">
    <location>
        <begin position="124"/>
        <end position="127"/>
    </location>
    <ligand>
        <name>GTP</name>
        <dbReference type="ChEBI" id="CHEBI:37565"/>
    </ligand>
</feature>
<feature type="modified residue" description="Cysteine methyl ester" evidence="1">
    <location>
        <position position="198"/>
    </location>
</feature>
<feature type="lipid moiety-binding region" description="S-geranylgeranyl cysteine" evidence="1">
    <location>
        <position position="198"/>
    </location>
</feature>
<feature type="strand" evidence="4">
    <location>
        <begin position="11"/>
        <end position="17"/>
    </location>
</feature>
<feature type="helix" evidence="4">
    <location>
        <begin position="24"/>
        <end position="32"/>
    </location>
</feature>
<feature type="turn" evidence="4">
    <location>
        <begin position="45"/>
        <end position="48"/>
    </location>
</feature>
<feature type="strand" evidence="4">
    <location>
        <begin position="49"/>
        <end position="54"/>
    </location>
</feature>
<feature type="strand" evidence="4">
    <location>
        <begin position="57"/>
        <end position="65"/>
    </location>
</feature>
<feature type="helix" evidence="4">
    <location>
        <begin position="75"/>
        <end position="80"/>
    </location>
</feature>
<feature type="strand" evidence="4">
    <location>
        <begin position="84"/>
        <end position="90"/>
    </location>
</feature>
<feature type="helix" evidence="4">
    <location>
        <begin position="96"/>
        <end position="99"/>
    </location>
</feature>
<feature type="helix" evidence="4">
    <location>
        <begin position="101"/>
        <end position="109"/>
    </location>
</feature>
<feature type="strand" evidence="4">
    <location>
        <begin position="118"/>
        <end position="123"/>
    </location>
</feature>
<feature type="helix" evidence="4">
    <location>
        <begin position="136"/>
        <end position="143"/>
    </location>
</feature>
<feature type="helix" evidence="4">
    <location>
        <begin position="144"/>
        <end position="146"/>
    </location>
</feature>
<feature type="strand" evidence="4">
    <location>
        <begin position="150"/>
        <end position="152"/>
    </location>
</feature>
<feature type="turn" evidence="4">
    <location>
        <begin position="155"/>
        <end position="158"/>
    </location>
</feature>
<feature type="helix" evidence="4">
    <location>
        <begin position="161"/>
        <end position="177"/>
    </location>
</feature>
<sequence>MSKKPTAGPALHKVIMVGSGGVGKSALTLQFMYDEFVEDYEPTKADSYRKKVVLDGEEVQIDILDTAGQEDYAAIRDNYFRSGEGFLCVFSITDDESFQATQEFREQILRVKNDESIPFLLVGNKCDLNDKRKVPLSECQLRAQQWAVPYVETSAKTRENVDKVFFDLMREIRSRKTEDSKATSGRAKDRCKKRRLKCTLL</sequence>
<dbReference type="EC" id="3.6.5.2" evidence="2"/>
<dbReference type="EMBL" id="U23800">
    <property type="protein sequence ID" value="AAC34902.1"/>
    <property type="molecule type" value="mRNA"/>
</dbReference>
<dbReference type="EMBL" id="AE014298">
    <property type="protein sequence ID" value="AAF45889.1"/>
    <property type="molecule type" value="Genomic_DNA"/>
</dbReference>
<dbReference type="EMBL" id="AE014298">
    <property type="protein sequence ID" value="AAF45890.1"/>
    <property type="molecule type" value="Genomic_DNA"/>
</dbReference>
<dbReference type="EMBL" id="AY118912">
    <property type="protein sequence ID" value="AAM50772.1"/>
    <property type="molecule type" value="mRNA"/>
</dbReference>
<dbReference type="RefSeq" id="NP_525063.1">
    <property type="nucleotide sequence ID" value="NM_080324.4"/>
</dbReference>
<dbReference type="RefSeq" id="NP_726882.1">
    <property type="nucleotide sequence ID" value="NM_166986.3"/>
</dbReference>
<dbReference type="PDB" id="5CM8">
    <property type="method" value="X-ray"/>
    <property type="resolution" value="2.60 A"/>
    <property type="chains" value="B=1-201"/>
</dbReference>
<dbReference type="PDB" id="5CM9">
    <property type="method" value="X-ray"/>
    <property type="resolution" value="2.60 A"/>
    <property type="chains" value="C/D=1-201"/>
</dbReference>
<dbReference type="PDBsum" id="5CM8"/>
<dbReference type="PDBsum" id="5CM9"/>
<dbReference type="SMR" id="P48555"/>
<dbReference type="BioGRID" id="57853">
    <property type="interactions" value="45"/>
</dbReference>
<dbReference type="DIP" id="DIP-19199N"/>
<dbReference type="FunCoup" id="P48555">
    <property type="interactions" value="917"/>
</dbReference>
<dbReference type="IntAct" id="P48555">
    <property type="interactions" value="19"/>
</dbReference>
<dbReference type="STRING" id="7227.FBpp0070559"/>
<dbReference type="SwissPalm" id="P48555"/>
<dbReference type="PaxDb" id="7227-FBpp0070558"/>
<dbReference type="DNASU" id="31332"/>
<dbReference type="EnsemblMetazoa" id="FBtr0070583">
    <property type="protein sequence ID" value="FBpp0070558"/>
    <property type="gene ID" value="FBgn0015286"/>
</dbReference>
<dbReference type="EnsemblMetazoa" id="FBtr0070584">
    <property type="protein sequence ID" value="FBpp0070559"/>
    <property type="gene ID" value="FBgn0015286"/>
</dbReference>
<dbReference type="GeneID" id="31332"/>
<dbReference type="KEGG" id="dme:Dmel_CG2849"/>
<dbReference type="AGR" id="FB:FBgn0015286"/>
<dbReference type="CTD" id="5898"/>
<dbReference type="FlyBase" id="FBgn0015286">
    <property type="gene designation" value="Rala"/>
</dbReference>
<dbReference type="VEuPathDB" id="VectorBase:FBgn0015286"/>
<dbReference type="eggNOG" id="KOG0395">
    <property type="taxonomic scope" value="Eukaryota"/>
</dbReference>
<dbReference type="GeneTree" id="ENSGT00940000168700"/>
<dbReference type="InParanoid" id="P48555"/>
<dbReference type="OrthoDB" id="5976022at2759"/>
<dbReference type="PhylomeDB" id="P48555"/>
<dbReference type="SignaLink" id="P48555"/>
<dbReference type="BioGRID-ORCS" id="31332">
    <property type="hits" value="0 hits in 3 CRISPR screens"/>
</dbReference>
<dbReference type="ChiTaRS" id="Rala">
    <property type="organism name" value="fly"/>
</dbReference>
<dbReference type="EvolutionaryTrace" id="P48555"/>
<dbReference type="GenomeRNAi" id="31332"/>
<dbReference type="PRO" id="PR:P48555"/>
<dbReference type="Proteomes" id="UP000000803">
    <property type="component" value="Chromosome X"/>
</dbReference>
<dbReference type="Bgee" id="FBgn0015286">
    <property type="expression patterns" value="Expressed in adult differentiating enterocyte in digestive tract and 267 other cell types or tissues"/>
</dbReference>
<dbReference type="ExpressionAtlas" id="P48555">
    <property type="expression patterns" value="baseline and differential"/>
</dbReference>
<dbReference type="GO" id="GO:0032154">
    <property type="term" value="C:cleavage furrow"/>
    <property type="evidence" value="ECO:0007669"/>
    <property type="project" value="UniProtKB-SubCell"/>
</dbReference>
<dbReference type="GO" id="GO:0090543">
    <property type="term" value="C:Flemming body"/>
    <property type="evidence" value="ECO:0007669"/>
    <property type="project" value="UniProtKB-SubCell"/>
</dbReference>
<dbReference type="GO" id="GO:0005886">
    <property type="term" value="C:plasma membrane"/>
    <property type="evidence" value="ECO:0000314"/>
    <property type="project" value="FlyBase"/>
</dbReference>
<dbReference type="GO" id="GO:0003925">
    <property type="term" value="F:G protein activity"/>
    <property type="evidence" value="ECO:0007669"/>
    <property type="project" value="UniProtKB-EC"/>
</dbReference>
<dbReference type="GO" id="GO:0019003">
    <property type="term" value="F:GDP binding"/>
    <property type="evidence" value="ECO:0000318"/>
    <property type="project" value="GO_Central"/>
</dbReference>
<dbReference type="GO" id="GO:0005525">
    <property type="term" value="F:GTP binding"/>
    <property type="evidence" value="ECO:0000318"/>
    <property type="project" value="GO_Central"/>
</dbReference>
<dbReference type="GO" id="GO:0003924">
    <property type="term" value="F:GTPase activity"/>
    <property type="evidence" value="ECO:0000314"/>
    <property type="project" value="FlyBase"/>
</dbReference>
<dbReference type="GO" id="GO:0030165">
    <property type="term" value="F:PDZ domain binding"/>
    <property type="evidence" value="ECO:0000353"/>
    <property type="project" value="FlyBase"/>
</dbReference>
<dbReference type="GO" id="GO:0007298">
    <property type="term" value="P:border follicle cell migration"/>
    <property type="evidence" value="ECO:0000315"/>
    <property type="project" value="FlyBase"/>
</dbReference>
<dbReference type="GO" id="GO:0050829">
    <property type="term" value="P:defense response to Gram-negative bacterium"/>
    <property type="evidence" value="ECO:0007001"/>
    <property type="project" value="FlyBase"/>
</dbReference>
<dbReference type="GO" id="GO:0045087">
    <property type="term" value="P:innate immune response"/>
    <property type="evidence" value="ECO:0000314"/>
    <property type="project" value="FlyBase"/>
</dbReference>
<dbReference type="GO" id="GO:0045824">
    <property type="term" value="P:negative regulation of innate immune response"/>
    <property type="evidence" value="ECO:0007001"/>
    <property type="project" value="FlyBase"/>
</dbReference>
<dbReference type="GO" id="GO:0046329">
    <property type="term" value="P:negative regulation of JNK cascade"/>
    <property type="evidence" value="ECO:0000316"/>
    <property type="project" value="FlyBase"/>
</dbReference>
<dbReference type="GO" id="GO:0045742">
    <property type="term" value="P:positive regulation of epidermal growth factor receptor signaling pathway"/>
    <property type="evidence" value="ECO:0000315"/>
    <property type="project" value="FlyBase"/>
</dbReference>
<dbReference type="GO" id="GO:2000648">
    <property type="term" value="P:positive regulation of stem cell proliferation"/>
    <property type="evidence" value="ECO:0000315"/>
    <property type="project" value="FlyBase"/>
</dbReference>
<dbReference type="GO" id="GO:0007464">
    <property type="term" value="P:R3/R4 cell fate commitment"/>
    <property type="evidence" value="ECO:0000315"/>
    <property type="project" value="FlyBase"/>
</dbReference>
<dbReference type="GO" id="GO:0007265">
    <property type="term" value="P:Ras protein signal transduction"/>
    <property type="evidence" value="ECO:0000316"/>
    <property type="project" value="FlyBase"/>
</dbReference>
<dbReference type="GO" id="GO:0031623">
    <property type="term" value="P:receptor internalization"/>
    <property type="evidence" value="ECO:0000315"/>
    <property type="project" value="FlyBase"/>
</dbReference>
<dbReference type="GO" id="GO:0022604">
    <property type="term" value="P:regulation of cell morphogenesis"/>
    <property type="evidence" value="ECO:0000315"/>
    <property type="project" value="FlyBase"/>
</dbReference>
<dbReference type="CDD" id="cd04139">
    <property type="entry name" value="RalA_RalB"/>
    <property type="match status" value="1"/>
</dbReference>
<dbReference type="FunFam" id="3.40.50.300:FF:000203">
    <property type="entry name" value="Putative ras-related protein ral-a"/>
    <property type="match status" value="1"/>
</dbReference>
<dbReference type="Gene3D" id="3.40.50.300">
    <property type="entry name" value="P-loop containing nucleotide triphosphate hydrolases"/>
    <property type="match status" value="1"/>
</dbReference>
<dbReference type="InterPro" id="IPR027417">
    <property type="entry name" value="P-loop_NTPase"/>
</dbReference>
<dbReference type="InterPro" id="IPR005225">
    <property type="entry name" value="Small_GTP-bd"/>
</dbReference>
<dbReference type="InterPro" id="IPR001806">
    <property type="entry name" value="Small_GTPase"/>
</dbReference>
<dbReference type="InterPro" id="IPR020849">
    <property type="entry name" value="Small_GTPase_Ras-type"/>
</dbReference>
<dbReference type="NCBIfam" id="TIGR00231">
    <property type="entry name" value="small_GTP"/>
    <property type="match status" value="1"/>
</dbReference>
<dbReference type="PANTHER" id="PTHR24070">
    <property type="entry name" value="RAS, DI-RAS, AND RHEB FAMILY MEMBERS OF SMALL GTPASE SUPERFAMILY"/>
    <property type="match status" value="1"/>
</dbReference>
<dbReference type="Pfam" id="PF00071">
    <property type="entry name" value="Ras"/>
    <property type="match status" value="1"/>
</dbReference>
<dbReference type="PRINTS" id="PR00449">
    <property type="entry name" value="RASTRNSFRMNG"/>
</dbReference>
<dbReference type="SMART" id="SM00175">
    <property type="entry name" value="RAB"/>
    <property type="match status" value="1"/>
</dbReference>
<dbReference type="SMART" id="SM00176">
    <property type="entry name" value="RAN"/>
    <property type="match status" value="1"/>
</dbReference>
<dbReference type="SMART" id="SM00173">
    <property type="entry name" value="RAS"/>
    <property type="match status" value="1"/>
</dbReference>
<dbReference type="SMART" id="SM00174">
    <property type="entry name" value="RHO"/>
    <property type="match status" value="1"/>
</dbReference>
<dbReference type="SUPFAM" id="SSF52540">
    <property type="entry name" value="P-loop containing nucleoside triphosphate hydrolases"/>
    <property type="match status" value="1"/>
</dbReference>
<dbReference type="PROSITE" id="PS51421">
    <property type="entry name" value="RAS"/>
    <property type="match status" value="1"/>
</dbReference>
<reference key="1">
    <citation type="submission" date="1998-09" db="EMBL/GenBank/DDBJ databases">
        <authorList>
            <person name="Winge P."/>
            <person name="Fleming J.T."/>
            <person name="Settleman J."/>
            <person name="Hariharan I.K."/>
        </authorList>
    </citation>
    <scope>NUCLEOTIDE SEQUENCE [MRNA]</scope>
    <source>
        <tissue>Eye imaginal disk</tissue>
    </source>
</reference>
<reference key="2">
    <citation type="journal article" date="2000" name="Science">
        <title>The genome sequence of Drosophila melanogaster.</title>
        <authorList>
            <person name="Adams M.D."/>
            <person name="Celniker S.E."/>
            <person name="Holt R.A."/>
            <person name="Evans C.A."/>
            <person name="Gocayne J.D."/>
            <person name="Amanatides P.G."/>
            <person name="Scherer S.E."/>
            <person name="Li P.W."/>
            <person name="Hoskins R.A."/>
            <person name="Galle R.F."/>
            <person name="George R.A."/>
            <person name="Lewis S.E."/>
            <person name="Richards S."/>
            <person name="Ashburner M."/>
            <person name="Henderson S.N."/>
            <person name="Sutton G.G."/>
            <person name="Wortman J.R."/>
            <person name="Yandell M.D."/>
            <person name="Zhang Q."/>
            <person name="Chen L.X."/>
            <person name="Brandon R.C."/>
            <person name="Rogers Y.-H.C."/>
            <person name="Blazej R.G."/>
            <person name="Champe M."/>
            <person name="Pfeiffer B.D."/>
            <person name="Wan K.H."/>
            <person name="Doyle C."/>
            <person name="Baxter E.G."/>
            <person name="Helt G."/>
            <person name="Nelson C.R."/>
            <person name="Miklos G.L.G."/>
            <person name="Abril J.F."/>
            <person name="Agbayani A."/>
            <person name="An H.-J."/>
            <person name="Andrews-Pfannkoch C."/>
            <person name="Baldwin D."/>
            <person name="Ballew R.M."/>
            <person name="Basu A."/>
            <person name="Baxendale J."/>
            <person name="Bayraktaroglu L."/>
            <person name="Beasley E.M."/>
            <person name="Beeson K.Y."/>
            <person name="Benos P.V."/>
            <person name="Berman B.P."/>
            <person name="Bhandari D."/>
            <person name="Bolshakov S."/>
            <person name="Borkova D."/>
            <person name="Botchan M.R."/>
            <person name="Bouck J."/>
            <person name="Brokstein P."/>
            <person name="Brottier P."/>
            <person name="Burtis K.C."/>
            <person name="Busam D.A."/>
            <person name="Butler H."/>
            <person name="Cadieu E."/>
            <person name="Center A."/>
            <person name="Chandra I."/>
            <person name="Cherry J.M."/>
            <person name="Cawley S."/>
            <person name="Dahlke C."/>
            <person name="Davenport L.B."/>
            <person name="Davies P."/>
            <person name="de Pablos B."/>
            <person name="Delcher A."/>
            <person name="Deng Z."/>
            <person name="Mays A.D."/>
            <person name="Dew I."/>
            <person name="Dietz S.M."/>
            <person name="Dodson K."/>
            <person name="Doup L.E."/>
            <person name="Downes M."/>
            <person name="Dugan-Rocha S."/>
            <person name="Dunkov B.C."/>
            <person name="Dunn P."/>
            <person name="Durbin K.J."/>
            <person name="Evangelista C.C."/>
            <person name="Ferraz C."/>
            <person name="Ferriera S."/>
            <person name="Fleischmann W."/>
            <person name="Fosler C."/>
            <person name="Gabrielian A.E."/>
            <person name="Garg N.S."/>
            <person name="Gelbart W.M."/>
            <person name="Glasser K."/>
            <person name="Glodek A."/>
            <person name="Gong F."/>
            <person name="Gorrell J.H."/>
            <person name="Gu Z."/>
            <person name="Guan P."/>
            <person name="Harris M."/>
            <person name="Harris N.L."/>
            <person name="Harvey D.A."/>
            <person name="Heiman T.J."/>
            <person name="Hernandez J.R."/>
            <person name="Houck J."/>
            <person name="Hostin D."/>
            <person name="Houston K.A."/>
            <person name="Howland T.J."/>
            <person name="Wei M.-H."/>
            <person name="Ibegwam C."/>
            <person name="Jalali M."/>
            <person name="Kalush F."/>
            <person name="Karpen G.H."/>
            <person name="Ke Z."/>
            <person name="Kennison J.A."/>
            <person name="Ketchum K.A."/>
            <person name="Kimmel B.E."/>
            <person name="Kodira C.D."/>
            <person name="Kraft C.L."/>
            <person name="Kravitz S."/>
            <person name="Kulp D."/>
            <person name="Lai Z."/>
            <person name="Lasko P."/>
            <person name="Lei Y."/>
            <person name="Levitsky A.A."/>
            <person name="Li J.H."/>
            <person name="Li Z."/>
            <person name="Liang Y."/>
            <person name="Lin X."/>
            <person name="Liu X."/>
            <person name="Mattei B."/>
            <person name="McIntosh T.C."/>
            <person name="McLeod M.P."/>
            <person name="McPherson D."/>
            <person name="Merkulov G."/>
            <person name="Milshina N.V."/>
            <person name="Mobarry C."/>
            <person name="Morris J."/>
            <person name="Moshrefi A."/>
            <person name="Mount S.M."/>
            <person name="Moy M."/>
            <person name="Murphy B."/>
            <person name="Murphy L."/>
            <person name="Muzny D.M."/>
            <person name="Nelson D.L."/>
            <person name="Nelson D.R."/>
            <person name="Nelson K.A."/>
            <person name="Nixon K."/>
            <person name="Nusskern D.R."/>
            <person name="Pacleb J.M."/>
            <person name="Palazzolo M."/>
            <person name="Pittman G.S."/>
            <person name="Pan S."/>
            <person name="Pollard J."/>
            <person name="Puri V."/>
            <person name="Reese M.G."/>
            <person name="Reinert K."/>
            <person name="Remington K."/>
            <person name="Saunders R.D.C."/>
            <person name="Scheeler F."/>
            <person name="Shen H."/>
            <person name="Shue B.C."/>
            <person name="Siden-Kiamos I."/>
            <person name="Simpson M."/>
            <person name="Skupski M.P."/>
            <person name="Smith T.J."/>
            <person name="Spier E."/>
            <person name="Spradling A.C."/>
            <person name="Stapleton M."/>
            <person name="Strong R."/>
            <person name="Sun E."/>
            <person name="Svirskas R."/>
            <person name="Tector C."/>
            <person name="Turner R."/>
            <person name="Venter E."/>
            <person name="Wang A.H."/>
            <person name="Wang X."/>
            <person name="Wang Z.-Y."/>
            <person name="Wassarman D.A."/>
            <person name="Weinstock G.M."/>
            <person name="Weissenbach J."/>
            <person name="Williams S.M."/>
            <person name="Woodage T."/>
            <person name="Worley K.C."/>
            <person name="Wu D."/>
            <person name="Yang S."/>
            <person name="Yao Q.A."/>
            <person name="Ye J."/>
            <person name="Yeh R.-F."/>
            <person name="Zaveri J.S."/>
            <person name="Zhan M."/>
            <person name="Zhang G."/>
            <person name="Zhao Q."/>
            <person name="Zheng L."/>
            <person name="Zheng X.H."/>
            <person name="Zhong F.N."/>
            <person name="Zhong W."/>
            <person name="Zhou X."/>
            <person name="Zhu S.C."/>
            <person name="Zhu X."/>
            <person name="Smith H.O."/>
            <person name="Gibbs R.A."/>
            <person name="Myers E.W."/>
            <person name="Rubin G.M."/>
            <person name="Venter J.C."/>
        </authorList>
    </citation>
    <scope>NUCLEOTIDE SEQUENCE [LARGE SCALE GENOMIC DNA]</scope>
    <source>
        <strain>Berkeley</strain>
    </source>
</reference>
<reference key="3">
    <citation type="journal article" date="2002" name="Genome Biol.">
        <title>Annotation of the Drosophila melanogaster euchromatic genome: a systematic review.</title>
        <authorList>
            <person name="Misra S."/>
            <person name="Crosby M.A."/>
            <person name="Mungall C.J."/>
            <person name="Matthews B.B."/>
            <person name="Campbell K.S."/>
            <person name="Hradecky P."/>
            <person name="Huang Y."/>
            <person name="Kaminker J.S."/>
            <person name="Millburn G.H."/>
            <person name="Prochnik S.E."/>
            <person name="Smith C.D."/>
            <person name="Tupy J.L."/>
            <person name="Whitfield E.J."/>
            <person name="Bayraktaroglu L."/>
            <person name="Berman B.P."/>
            <person name="Bettencourt B.R."/>
            <person name="Celniker S.E."/>
            <person name="de Grey A.D.N.J."/>
            <person name="Drysdale R.A."/>
            <person name="Harris N.L."/>
            <person name="Richter J."/>
            <person name="Russo S."/>
            <person name="Schroeder A.J."/>
            <person name="Shu S.Q."/>
            <person name="Stapleton M."/>
            <person name="Yamada C."/>
            <person name="Ashburner M."/>
            <person name="Gelbart W.M."/>
            <person name="Rubin G.M."/>
            <person name="Lewis S.E."/>
        </authorList>
    </citation>
    <scope>GENOME REANNOTATION</scope>
    <source>
        <strain>Berkeley</strain>
    </source>
</reference>
<reference key="4">
    <citation type="journal article" date="2002" name="Genome Biol.">
        <title>A Drosophila full-length cDNA resource.</title>
        <authorList>
            <person name="Stapleton M."/>
            <person name="Carlson J.W."/>
            <person name="Brokstein P."/>
            <person name="Yu C."/>
            <person name="Champe M."/>
            <person name="George R.A."/>
            <person name="Guarin H."/>
            <person name="Kronmiller B."/>
            <person name="Pacleb J.M."/>
            <person name="Park S."/>
            <person name="Wan K.H."/>
            <person name="Rubin G.M."/>
            <person name="Celniker S.E."/>
        </authorList>
    </citation>
    <scope>NUCLEOTIDE SEQUENCE [LARGE SCALE MRNA]</scope>
    <source>
        <strain>Berkeley</strain>
        <tissue>Embryo</tissue>
    </source>
</reference>
<comment type="catalytic activity">
    <reaction evidence="2">
        <text>GTP + H2O = GDP + phosphate + H(+)</text>
        <dbReference type="Rhea" id="RHEA:19669"/>
        <dbReference type="ChEBI" id="CHEBI:15377"/>
        <dbReference type="ChEBI" id="CHEBI:15378"/>
        <dbReference type="ChEBI" id="CHEBI:37565"/>
        <dbReference type="ChEBI" id="CHEBI:43474"/>
        <dbReference type="ChEBI" id="CHEBI:58189"/>
        <dbReference type="EC" id="3.6.5.2"/>
    </reaction>
    <physiologicalReaction direction="left-to-right" evidence="2">
        <dbReference type="Rhea" id="RHEA:19670"/>
    </physiologicalReaction>
</comment>
<comment type="subcellular location">
    <subcellularLocation>
        <location evidence="2">Cell membrane</location>
        <topology evidence="2">Lipid-anchor</topology>
        <orientation>Cytoplasmic side</orientation>
    </subcellularLocation>
    <subcellularLocation>
        <location evidence="2">Cleavage furrow</location>
    </subcellularLocation>
    <subcellularLocation>
        <location evidence="2">Midbody</location>
        <location evidence="2">Midbody ring</location>
    </subcellularLocation>
</comment>
<comment type="similarity">
    <text evidence="3">Belongs to the small GTPase superfamily. Ras family.</text>
</comment>
<proteinExistence type="evidence at protein level"/>
<protein>
    <recommendedName>
        <fullName>Ras-related protein Ral-a</fullName>
        <ecNumber evidence="2">3.6.5.2</ecNumber>
    </recommendedName>
</protein>
<keyword id="KW-0002">3D-structure</keyword>
<keyword id="KW-1003">Cell membrane</keyword>
<keyword id="KW-0342">GTP-binding</keyword>
<keyword id="KW-0378">Hydrolase</keyword>
<keyword id="KW-0449">Lipoprotein</keyword>
<keyword id="KW-0472">Membrane</keyword>
<keyword id="KW-0488">Methylation</keyword>
<keyword id="KW-0547">Nucleotide-binding</keyword>
<keyword id="KW-0636">Prenylation</keyword>
<keyword id="KW-1185">Reference proteome</keyword>